<evidence type="ECO:0000255" key="1">
    <source>
        <dbReference type="PROSITE-ProRule" id="PRU00541"/>
    </source>
</evidence>
<evidence type="ECO:0000255" key="2">
    <source>
        <dbReference type="PROSITE-ProRule" id="PRU00542"/>
    </source>
</evidence>
<evidence type="ECO:0000256" key="3">
    <source>
        <dbReference type="SAM" id="MobiDB-lite"/>
    </source>
</evidence>
<evidence type="ECO:0000305" key="4"/>
<comment type="function">
    <text>Involved in DNA repair and mitotic recombination.</text>
</comment>
<comment type="subcellular location">
    <subcellularLocation>
        <location evidence="4">Nucleus</location>
    </subcellularLocation>
</comment>
<comment type="similarity">
    <text evidence="4">Belongs to the SNF2/RAD54 helicase family.</text>
</comment>
<reference key="1">
    <citation type="submission" date="1999-08" db="EMBL/GenBank/DDBJ databases">
        <title>Rad54b, a Rad54-related gene product, is involved in recombinational DNA repair.</title>
        <authorList>
            <person name="Yamaguchi-Iwai Y."/>
        </authorList>
    </citation>
    <scope>NUCLEOTIDE SEQUENCE [MRNA]</scope>
    <source>
        <tissue>Testis</tissue>
    </source>
</reference>
<sequence length="918" mass="102878">MRRSAAPSQVLGNVAKKPRFIPPGKSNALCPKIETEETDQDVKLKEIGEKHGNASLFSEMFSENQSENFTQSVESSGKVKSTKAWNSTSKCSKLEMKTQSAPKADAMHLPTSGMAKEAAAQEEPDCLTKYFSVMWCKASKKKHKKWEGDAILITKGKSVILKDMEGKDIGRGTGYKSKELDSLEEGQTLMIGGKEIEVMGVISADDFSSGRCFQAGIATHDTVPTALPQTTMKQFCKPIKSACQPSTKENILLNPQSCKPRHNPNDTNSLVMPRPNASHQCMFNKAGLPVVDVVVDPYIANNLRPHQREGIVFLYECVMGMRVSGRFGAILADEMGLGKTLQCISLVWTLLRQGVYGCKPVLKRALIVTPGSLVKNWKKEFQKWLGSERIKVFTVDQDHKVEEFISSPLYSVMIISYEMLLRSLDQIQAIEFNLLICDEGHRLKNSSIKTTTALTNLSCERRIILTGTPIQNDLQEFYALIEFVNPGVLGSLSTYRKIYEEPIVRSREPSATKEEKDLGEKRAAELTRLTGLFILRRTQEVINKFLPPKKENIIFCQPTALQLELYRKLLSSRVISSCLQGRLENSPHLICIGALKKLCNHPCLLFKALKEKCCDPKSDEHVESSLYEGLTDVFPQDYTSDTFSEIDSGKLQVLVKLLAAIRELSSSERVVLVSNYTQTLNVLLETCKCYGYSYTRLDGNTPVSQRQQIVDSFNSKFSPAFIFLLSSKAGGVGLNLVGASHLILYDIDWNPATDIQAMARVWRDGQKCTVHIYRLLTTGTIEEKIYQRQISKQDLSGAVVDLSKTSEHIHFSVEELRNLFTLHENSSCVTHDLLECDCMGNKDHQNPSSKKPSVSRCCQLRQDQGKHNSKKPLSMSQLMQWKHFSGQHQALPDPFLERIKENVSFIFQNVTNATSPTQ</sequence>
<proteinExistence type="evidence at transcript level"/>
<name>RA54B_CHICK</name>
<organism>
    <name type="scientific">Gallus gallus</name>
    <name type="common">Chicken</name>
    <dbReference type="NCBI Taxonomy" id="9031"/>
    <lineage>
        <taxon>Eukaryota</taxon>
        <taxon>Metazoa</taxon>
        <taxon>Chordata</taxon>
        <taxon>Craniata</taxon>
        <taxon>Vertebrata</taxon>
        <taxon>Euteleostomi</taxon>
        <taxon>Archelosauria</taxon>
        <taxon>Archosauria</taxon>
        <taxon>Dinosauria</taxon>
        <taxon>Saurischia</taxon>
        <taxon>Theropoda</taxon>
        <taxon>Coelurosauria</taxon>
        <taxon>Aves</taxon>
        <taxon>Neognathae</taxon>
        <taxon>Galloanserae</taxon>
        <taxon>Galliformes</taxon>
        <taxon>Phasianidae</taxon>
        <taxon>Phasianinae</taxon>
        <taxon>Gallus</taxon>
    </lineage>
</organism>
<protein>
    <recommendedName>
        <fullName>DNA repair and recombination protein RAD54B</fullName>
        <ecNumber>3.6.4.-</ecNumber>
    </recommendedName>
    <alternativeName>
        <fullName>RAD54 homolog B</fullName>
    </alternativeName>
</protein>
<feature type="chain" id="PRO_0000074342" description="DNA repair and recombination protein RAD54B">
    <location>
        <begin position="1"/>
        <end position="918"/>
    </location>
</feature>
<feature type="domain" description="Helicase ATP-binding" evidence="1">
    <location>
        <begin position="320"/>
        <end position="487"/>
    </location>
</feature>
<feature type="domain" description="Helicase C-terminal" evidence="2">
    <location>
        <begin position="653"/>
        <end position="817"/>
    </location>
</feature>
<feature type="region of interest" description="Disordered" evidence="3">
    <location>
        <begin position="1"/>
        <end position="29"/>
    </location>
</feature>
<feature type="region of interest" description="Disordered" evidence="3">
    <location>
        <begin position="842"/>
        <end position="873"/>
    </location>
</feature>
<feature type="short sequence motif" description="DEGH box">
    <location>
        <begin position="438"/>
        <end position="441"/>
    </location>
</feature>
<feature type="compositionally biased region" description="Polar residues" evidence="3">
    <location>
        <begin position="1"/>
        <end position="11"/>
    </location>
</feature>
<feature type="binding site" evidence="1">
    <location>
        <begin position="333"/>
        <end position="340"/>
    </location>
    <ligand>
        <name>ATP</name>
        <dbReference type="ChEBI" id="CHEBI:30616"/>
    </ligand>
</feature>
<keyword id="KW-0067">ATP-binding</keyword>
<keyword id="KW-0227">DNA damage</keyword>
<keyword id="KW-0234">DNA repair</keyword>
<keyword id="KW-0238">DNA-binding</keyword>
<keyword id="KW-0347">Helicase</keyword>
<keyword id="KW-0378">Hydrolase</keyword>
<keyword id="KW-0547">Nucleotide-binding</keyword>
<keyword id="KW-0539">Nucleus</keyword>
<keyword id="KW-1185">Reference proteome</keyword>
<gene>
    <name type="primary">RAD54B</name>
</gene>
<dbReference type="EC" id="3.6.4.-"/>
<dbReference type="EMBL" id="AF178529">
    <property type="protein sequence ID" value="AAG09308.1"/>
    <property type="molecule type" value="mRNA"/>
</dbReference>
<dbReference type="RefSeq" id="NP_990041.1">
    <property type="nucleotide sequence ID" value="NM_204710.1"/>
</dbReference>
<dbReference type="SMR" id="Q9DG67"/>
<dbReference type="FunCoup" id="Q9DG67">
    <property type="interactions" value="314"/>
</dbReference>
<dbReference type="STRING" id="9031.ENSGALP00000052510"/>
<dbReference type="PaxDb" id="9031-ENSGALP00000025665"/>
<dbReference type="GeneID" id="395449"/>
<dbReference type="KEGG" id="gga:395449"/>
<dbReference type="CTD" id="25788"/>
<dbReference type="VEuPathDB" id="HostDB:geneid_395449"/>
<dbReference type="eggNOG" id="KOG0390">
    <property type="taxonomic scope" value="Eukaryota"/>
</dbReference>
<dbReference type="InParanoid" id="Q9DG67"/>
<dbReference type="OrthoDB" id="413460at2759"/>
<dbReference type="PhylomeDB" id="Q9DG67"/>
<dbReference type="PRO" id="PR:Q9DG67"/>
<dbReference type="Proteomes" id="UP000000539">
    <property type="component" value="Unassembled WGS sequence"/>
</dbReference>
<dbReference type="GO" id="GO:0005634">
    <property type="term" value="C:nucleus"/>
    <property type="evidence" value="ECO:0000318"/>
    <property type="project" value="GO_Central"/>
</dbReference>
<dbReference type="GO" id="GO:0005524">
    <property type="term" value="F:ATP binding"/>
    <property type="evidence" value="ECO:0007669"/>
    <property type="project" value="UniProtKB-KW"/>
</dbReference>
<dbReference type="GO" id="GO:0003677">
    <property type="term" value="F:DNA binding"/>
    <property type="evidence" value="ECO:0007669"/>
    <property type="project" value="UniProtKB-KW"/>
</dbReference>
<dbReference type="GO" id="GO:0015616">
    <property type="term" value="F:DNA translocase activity"/>
    <property type="evidence" value="ECO:0000318"/>
    <property type="project" value="GO_Central"/>
</dbReference>
<dbReference type="GO" id="GO:0004386">
    <property type="term" value="F:helicase activity"/>
    <property type="evidence" value="ECO:0007669"/>
    <property type="project" value="UniProtKB-KW"/>
</dbReference>
<dbReference type="GO" id="GO:0016787">
    <property type="term" value="F:hydrolase activity"/>
    <property type="evidence" value="ECO:0007669"/>
    <property type="project" value="UniProtKB-KW"/>
</dbReference>
<dbReference type="GO" id="GO:0000724">
    <property type="term" value="P:double-strand break repair via homologous recombination"/>
    <property type="evidence" value="ECO:0000318"/>
    <property type="project" value="GO_Central"/>
</dbReference>
<dbReference type="GO" id="GO:0007131">
    <property type="term" value="P:reciprocal meiotic recombination"/>
    <property type="evidence" value="ECO:0000318"/>
    <property type="project" value="GO_Central"/>
</dbReference>
<dbReference type="CDD" id="cd18066">
    <property type="entry name" value="DEXHc_RAD54B"/>
    <property type="match status" value="1"/>
</dbReference>
<dbReference type="CDD" id="cd18793">
    <property type="entry name" value="SF2_C_SNF"/>
    <property type="match status" value="1"/>
</dbReference>
<dbReference type="FunFam" id="3.40.50.300:FF:000332">
    <property type="entry name" value="DNA repair and recombination protein RAD54-like"/>
    <property type="match status" value="1"/>
</dbReference>
<dbReference type="FunFam" id="1.20.120.850:FF:000004">
    <property type="entry name" value="DNA repair and recombination protein RAD54B"/>
    <property type="match status" value="1"/>
</dbReference>
<dbReference type="FunFam" id="3.40.50.10810:FF:000020">
    <property type="entry name" value="DNA repair and recombination protein RAD54B"/>
    <property type="match status" value="1"/>
</dbReference>
<dbReference type="Gene3D" id="3.40.50.300">
    <property type="entry name" value="P-loop containing nucleotide triphosphate hydrolases"/>
    <property type="match status" value="1"/>
</dbReference>
<dbReference type="Gene3D" id="1.20.120.850">
    <property type="entry name" value="SWI2/SNF2 ATPases, N-terminal domain"/>
    <property type="match status" value="1"/>
</dbReference>
<dbReference type="Gene3D" id="3.40.50.10810">
    <property type="entry name" value="Tandem AAA-ATPase domain"/>
    <property type="match status" value="1"/>
</dbReference>
<dbReference type="InterPro" id="IPR014001">
    <property type="entry name" value="Helicase_ATP-bd"/>
</dbReference>
<dbReference type="InterPro" id="IPR001650">
    <property type="entry name" value="Helicase_C-like"/>
</dbReference>
<dbReference type="InterPro" id="IPR027417">
    <property type="entry name" value="P-loop_NTPase"/>
</dbReference>
<dbReference type="InterPro" id="IPR038718">
    <property type="entry name" value="SNF2-like_sf"/>
</dbReference>
<dbReference type="InterPro" id="IPR049730">
    <property type="entry name" value="SNF2/RAD54-like_C"/>
</dbReference>
<dbReference type="InterPro" id="IPR000330">
    <property type="entry name" value="SNF2_N"/>
</dbReference>
<dbReference type="InterPro" id="IPR050496">
    <property type="entry name" value="SNF2_RAD54_helicase_repair"/>
</dbReference>
<dbReference type="PANTHER" id="PTHR45629:SF7">
    <property type="entry name" value="DNA EXCISION REPAIR PROTEIN ERCC-6-RELATED"/>
    <property type="match status" value="1"/>
</dbReference>
<dbReference type="PANTHER" id="PTHR45629">
    <property type="entry name" value="SNF2/RAD54 FAMILY MEMBER"/>
    <property type="match status" value="1"/>
</dbReference>
<dbReference type="Pfam" id="PF00271">
    <property type="entry name" value="Helicase_C"/>
    <property type="match status" value="1"/>
</dbReference>
<dbReference type="Pfam" id="PF00176">
    <property type="entry name" value="SNF2-rel_dom"/>
    <property type="match status" value="1"/>
</dbReference>
<dbReference type="SMART" id="SM00487">
    <property type="entry name" value="DEXDc"/>
    <property type="match status" value="1"/>
</dbReference>
<dbReference type="SMART" id="SM00490">
    <property type="entry name" value="HELICc"/>
    <property type="match status" value="1"/>
</dbReference>
<dbReference type="SUPFAM" id="SSF52540">
    <property type="entry name" value="P-loop containing nucleoside triphosphate hydrolases"/>
    <property type="match status" value="2"/>
</dbReference>
<dbReference type="PROSITE" id="PS51192">
    <property type="entry name" value="HELICASE_ATP_BIND_1"/>
    <property type="match status" value="1"/>
</dbReference>
<dbReference type="PROSITE" id="PS51194">
    <property type="entry name" value="HELICASE_CTER"/>
    <property type="match status" value="1"/>
</dbReference>
<accession>Q9DG67</accession>